<protein>
    <recommendedName>
        <fullName>LYR motif-containing protein 1</fullName>
    </recommendedName>
</protein>
<reference key="1">
    <citation type="journal article" date="2005" name="Science">
        <title>The transcriptional landscape of the mammalian genome.</title>
        <authorList>
            <person name="Carninci P."/>
            <person name="Kasukawa T."/>
            <person name="Katayama S."/>
            <person name="Gough J."/>
            <person name="Frith M.C."/>
            <person name="Maeda N."/>
            <person name="Oyama R."/>
            <person name="Ravasi T."/>
            <person name="Lenhard B."/>
            <person name="Wells C."/>
            <person name="Kodzius R."/>
            <person name="Shimokawa K."/>
            <person name="Bajic V.B."/>
            <person name="Brenner S.E."/>
            <person name="Batalov S."/>
            <person name="Forrest A.R."/>
            <person name="Zavolan M."/>
            <person name="Davis M.J."/>
            <person name="Wilming L.G."/>
            <person name="Aidinis V."/>
            <person name="Allen J.E."/>
            <person name="Ambesi-Impiombato A."/>
            <person name="Apweiler R."/>
            <person name="Aturaliya R.N."/>
            <person name="Bailey T.L."/>
            <person name="Bansal M."/>
            <person name="Baxter L."/>
            <person name="Beisel K.W."/>
            <person name="Bersano T."/>
            <person name="Bono H."/>
            <person name="Chalk A.M."/>
            <person name="Chiu K.P."/>
            <person name="Choudhary V."/>
            <person name="Christoffels A."/>
            <person name="Clutterbuck D.R."/>
            <person name="Crowe M.L."/>
            <person name="Dalla E."/>
            <person name="Dalrymple B.P."/>
            <person name="de Bono B."/>
            <person name="Della Gatta G."/>
            <person name="di Bernardo D."/>
            <person name="Down T."/>
            <person name="Engstrom P."/>
            <person name="Fagiolini M."/>
            <person name="Faulkner G."/>
            <person name="Fletcher C.F."/>
            <person name="Fukushima T."/>
            <person name="Furuno M."/>
            <person name="Futaki S."/>
            <person name="Gariboldi M."/>
            <person name="Georgii-Hemming P."/>
            <person name="Gingeras T.R."/>
            <person name="Gojobori T."/>
            <person name="Green R.E."/>
            <person name="Gustincich S."/>
            <person name="Harbers M."/>
            <person name="Hayashi Y."/>
            <person name="Hensch T.K."/>
            <person name="Hirokawa N."/>
            <person name="Hill D."/>
            <person name="Huminiecki L."/>
            <person name="Iacono M."/>
            <person name="Ikeo K."/>
            <person name="Iwama A."/>
            <person name="Ishikawa T."/>
            <person name="Jakt M."/>
            <person name="Kanapin A."/>
            <person name="Katoh M."/>
            <person name="Kawasawa Y."/>
            <person name="Kelso J."/>
            <person name="Kitamura H."/>
            <person name="Kitano H."/>
            <person name="Kollias G."/>
            <person name="Krishnan S.P."/>
            <person name="Kruger A."/>
            <person name="Kummerfeld S.K."/>
            <person name="Kurochkin I.V."/>
            <person name="Lareau L.F."/>
            <person name="Lazarevic D."/>
            <person name="Lipovich L."/>
            <person name="Liu J."/>
            <person name="Liuni S."/>
            <person name="McWilliam S."/>
            <person name="Madan Babu M."/>
            <person name="Madera M."/>
            <person name="Marchionni L."/>
            <person name="Matsuda H."/>
            <person name="Matsuzawa S."/>
            <person name="Miki H."/>
            <person name="Mignone F."/>
            <person name="Miyake S."/>
            <person name="Morris K."/>
            <person name="Mottagui-Tabar S."/>
            <person name="Mulder N."/>
            <person name="Nakano N."/>
            <person name="Nakauchi H."/>
            <person name="Ng P."/>
            <person name="Nilsson R."/>
            <person name="Nishiguchi S."/>
            <person name="Nishikawa S."/>
            <person name="Nori F."/>
            <person name="Ohara O."/>
            <person name="Okazaki Y."/>
            <person name="Orlando V."/>
            <person name="Pang K.C."/>
            <person name="Pavan W.J."/>
            <person name="Pavesi G."/>
            <person name="Pesole G."/>
            <person name="Petrovsky N."/>
            <person name="Piazza S."/>
            <person name="Reed J."/>
            <person name="Reid J.F."/>
            <person name="Ring B.Z."/>
            <person name="Ringwald M."/>
            <person name="Rost B."/>
            <person name="Ruan Y."/>
            <person name="Salzberg S.L."/>
            <person name="Sandelin A."/>
            <person name="Schneider C."/>
            <person name="Schoenbach C."/>
            <person name="Sekiguchi K."/>
            <person name="Semple C.A."/>
            <person name="Seno S."/>
            <person name="Sessa L."/>
            <person name="Sheng Y."/>
            <person name="Shibata Y."/>
            <person name="Shimada H."/>
            <person name="Shimada K."/>
            <person name="Silva D."/>
            <person name="Sinclair B."/>
            <person name="Sperling S."/>
            <person name="Stupka E."/>
            <person name="Sugiura K."/>
            <person name="Sultana R."/>
            <person name="Takenaka Y."/>
            <person name="Taki K."/>
            <person name="Tammoja K."/>
            <person name="Tan S.L."/>
            <person name="Tang S."/>
            <person name="Taylor M.S."/>
            <person name="Tegner J."/>
            <person name="Teichmann S.A."/>
            <person name="Ueda H.R."/>
            <person name="van Nimwegen E."/>
            <person name="Verardo R."/>
            <person name="Wei C.L."/>
            <person name="Yagi K."/>
            <person name="Yamanishi H."/>
            <person name="Zabarovsky E."/>
            <person name="Zhu S."/>
            <person name="Zimmer A."/>
            <person name="Hide W."/>
            <person name="Bult C."/>
            <person name="Grimmond S.M."/>
            <person name="Teasdale R.D."/>
            <person name="Liu E.T."/>
            <person name="Brusic V."/>
            <person name="Quackenbush J."/>
            <person name="Wahlestedt C."/>
            <person name="Mattick J.S."/>
            <person name="Hume D.A."/>
            <person name="Kai C."/>
            <person name="Sasaki D."/>
            <person name="Tomaru Y."/>
            <person name="Fukuda S."/>
            <person name="Kanamori-Katayama M."/>
            <person name="Suzuki M."/>
            <person name="Aoki J."/>
            <person name="Arakawa T."/>
            <person name="Iida J."/>
            <person name="Imamura K."/>
            <person name="Itoh M."/>
            <person name="Kato T."/>
            <person name="Kawaji H."/>
            <person name="Kawagashira N."/>
            <person name="Kawashima T."/>
            <person name="Kojima M."/>
            <person name="Kondo S."/>
            <person name="Konno H."/>
            <person name="Nakano K."/>
            <person name="Ninomiya N."/>
            <person name="Nishio T."/>
            <person name="Okada M."/>
            <person name="Plessy C."/>
            <person name="Shibata K."/>
            <person name="Shiraki T."/>
            <person name="Suzuki S."/>
            <person name="Tagami M."/>
            <person name="Waki K."/>
            <person name="Watahiki A."/>
            <person name="Okamura-Oho Y."/>
            <person name="Suzuki H."/>
            <person name="Kawai J."/>
            <person name="Hayashizaki Y."/>
        </authorList>
    </citation>
    <scope>NUCLEOTIDE SEQUENCE [LARGE SCALE MRNA]</scope>
    <source>
        <strain>C57BL/6J</strain>
        <tissue>Inner ear</tissue>
        <tissue>Testis</tissue>
        <tissue>Tongue</tissue>
    </source>
</reference>
<reference key="2">
    <citation type="journal article" date="2004" name="Genome Res.">
        <title>The status, quality, and expansion of the NIH full-length cDNA project: the Mammalian Gene Collection (MGC).</title>
        <authorList>
            <consortium name="The MGC Project Team"/>
        </authorList>
    </citation>
    <scope>NUCLEOTIDE SEQUENCE [LARGE SCALE MRNA]</scope>
</reference>
<reference key="3">
    <citation type="journal article" date="2010" name="Cell">
        <title>A tissue-specific atlas of mouse protein phosphorylation and expression.</title>
        <authorList>
            <person name="Huttlin E.L."/>
            <person name="Jedrychowski M.P."/>
            <person name="Elias J.E."/>
            <person name="Goswami T."/>
            <person name="Rad R."/>
            <person name="Beausoleil S.A."/>
            <person name="Villen J."/>
            <person name="Haas W."/>
            <person name="Sowa M.E."/>
            <person name="Gygi S.P."/>
        </authorList>
    </citation>
    <scope>IDENTIFICATION BY MASS SPECTROMETRY [LARGE SCALE ANALYSIS]</scope>
    <source>
        <tissue>Brain</tissue>
    </source>
</reference>
<keyword id="KW-1185">Reference proteome</keyword>
<name>LYRM1_MOUSE</name>
<feature type="chain" id="PRO_0000174311" description="LYR motif-containing protein 1">
    <location>
        <begin position="1"/>
        <end position="122"/>
    </location>
</feature>
<proteinExistence type="evidence at protein level"/>
<evidence type="ECO:0000250" key="1"/>
<evidence type="ECO:0000305" key="2"/>
<sequence length="122" mass="14224">MTAATRQEVLCLYRSIFRLARKWQAASGQMEDTIEEKQYILKEARTLFQKNKNLTDPELIKQCIVECTARIEIGLHYQIPYPRPIHLPPMGLTARRGRGLQTQEKLRKLSKPVYLKSHDEVS</sequence>
<organism>
    <name type="scientific">Mus musculus</name>
    <name type="common">Mouse</name>
    <dbReference type="NCBI Taxonomy" id="10090"/>
    <lineage>
        <taxon>Eukaryota</taxon>
        <taxon>Metazoa</taxon>
        <taxon>Chordata</taxon>
        <taxon>Craniata</taxon>
        <taxon>Vertebrata</taxon>
        <taxon>Euteleostomi</taxon>
        <taxon>Mammalia</taxon>
        <taxon>Eutheria</taxon>
        <taxon>Euarchontoglires</taxon>
        <taxon>Glires</taxon>
        <taxon>Rodentia</taxon>
        <taxon>Myomorpha</taxon>
        <taxon>Muroidea</taxon>
        <taxon>Muridae</taxon>
        <taxon>Murinae</taxon>
        <taxon>Mus</taxon>
        <taxon>Mus</taxon>
    </lineage>
</organism>
<accession>Q9CQB7</accession>
<accession>Q3TZE0</accession>
<gene>
    <name type="primary">Lyrm1</name>
</gene>
<dbReference type="EMBL" id="AK009135">
    <property type="protein sequence ID" value="BAB26096.1"/>
    <property type="molecule type" value="mRNA"/>
</dbReference>
<dbReference type="EMBL" id="AK015083">
    <property type="protein sequence ID" value="BAB29706.1"/>
    <property type="molecule type" value="mRNA"/>
</dbReference>
<dbReference type="EMBL" id="AK157931">
    <property type="protein sequence ID" value="BAE34269.1"/>
    <property type="molecule type" value="mRNA"/>
</dbReference>
<dbReference type="EMBL" id="BC011339">
    <property type="protein sequence ID" value="AAH11339.1"/>
    <property type="molecule type" value="mRNA"/>
</dbReference>
<dbReference type="CCDS" id="CCDS21790.1"/>
<dbReference type="RefSeq" id="NP_001272888.1">
    <property type="nucleotide sequence ID" value="NM_001285959.1"/>
</dbReference>
<dbReference type="RefSeq" id="NP_001272889.1">
    <property type="nucleotide sequence ID" value="NM_001285960.1"/>
</dbReference>
<dbReference type="RefSeq" id="NP_001272890.1">
    <property type="nucleotide sequence ID" value="NM_001285961.2"/>
</dbReference>
<dbReference type="RefSeq" id="NP_083886.1">
    <property type="nucleotide sequence ID" value="NM_029610.3"/>
</dbReference>
<dbReference type="RefSeq" id="XP_006508297.1">
    <property type="nucleotide sequence ID" value="XM_006508234.5"/>
</dbReference>
<dbReference type="RefSeq" id="XP_006508298.1">
    <property type="nucleotide sequence ID" value="XM_006508235.5"/>
</dbReference>
<dbReference type="RefSeq" id="XP_006508299.1">
    <property type="nucleotide sequence ID" value="XM_006508236.5"/>
</dbReference>
<dbReference type="RefSeq" id="XP_006508300.1">
    <property type="nucleotide sequence ID" value="XM_006508237.4"/>
</dbReference>
<dbReference type="RefSeq" id="XP_006508301.1">
    <property type="nucleotide sequence ID" value="XM_006508238.4"/>
</dbReference>
<dbReference type="RefSeq" id="XP_006508302.1">
    <property type="nucleotide sequence ID" value="XM_006508239.5"/>
</dbReference>
<dbReference type="RefSeq" id="XP_006508303.1">
    <property type="nucleotide sequence ID" value="XM_006508240.4"/>
</dbReference>
<dbReference type="RefSeq" id="XP_006508304.1">
    <property type="nucleotide sequence ID" value="XM_006508241.4"/>
</dbReference>
<dbReference type="RefSeq" id="XP_006508306.1">
    <property type="nucleotide sequence ID" value="XM_006508243.4"/>
</dbReference>
<dbReference type="RefSeq" id="XP_006508307.1">
    <property type="nucleotide sequence ID" value="XM_006508244.4"/>
</dbReference>
<dbReference type="RefSeq" id="XP_017167827.1">
    <property type="nucleotide sequence ID" value="XM_017312338.1"/>
</dbReference>
<dbReference type="RefSeq" id="XP_017167828.1">
    <property type="nucleotide sequence ID" value="XM_017312339.1"/>
</dbReference>
<dbReference type="RefSeq" id="XP_036009372.1">
    <property type="nucleotide sequence ID" value="XM_036153479.1"/>
</dbReference>
<dbReference type="RefSeq" id="XP_036009373.1">
    <property type="nucleotide sequence ID" value="XM_036153480.1"/>
</dbReference>
<dbReference type="SMR" id="Q9CQB7"/>
<dbReference type="FunCoup" id="Q9CQB7">
    <property type="interactions" value="957"/>
</dbReference>
<dbReference type="STRING" id="10090.ENSMUSP00000146648"/>
<dbReference type="iPTMnet" id="Q9CQB7"/>
<dbReference type="PhosphoSitePlus" id="Q9CQB7"/>
<dbReference type="jPOST" id="Q9CQB7"/>
<dbReference type="PaxDb" id="10090-ENSMUSP00000102127"/>
<dbReference type="PeptideAtlas" id="Q9CQB7"/>
<dbReference type="ProteomicsDB" id="291980"/>
<dbReference type="Antibodypedia" id="42976">
    <property type="antibodies" value="78 antibodies from 21 providers"/>
</dbReference>
<dbReference type="DNASU" id="73919"/>
<dbReference type="Ensembl" id="ENSMUST00000054440.11">
    <property type="protein sequence ID" value="ENSMUSP00000051616.4"/>
    <property type="gene ID" value="ENSMUSG00000030922.13"/>
</dbReference>
<dbReference type="Ensembl" id="ENSMUST00000106516.2">
    <property type="protein sequence ID" value="ENSMUSP00000102126.2"/>
    <property type="gene ID" value="ENSMUSG00000030922.13"/>
</dbReference>
<dbReference type="Ensembl" id="ENSMUST00000106517.9">
    <property type="protein sequence ID" value="ENSMUSP00000102127.2"/>
    <property type="gene ID" value="ENSMUSG00000030922.13"/>
</dbReference>
<dbReference type="Ensembl" id="ENSMUST00000106518.9">
    <property type="protein sequence ID" value="ENSMUSP00000102128.2"/>
    <property type="gene ID" value="ENSMUSG00000030922.13"/>
</dbReference>
<dbReference type="Ensembl" id="ENSMUST00000207270.2">
    <property type="protein sequence ID" value="ENSMUSP00000146648.2"/>
    <property type="gene ID" value="ENSMUSG00000030922.13"/>
</dbReference>
<dbReference type="Ensembl" id="ENSMUST00000208202.2">
    <property type="protein sequence ID" value="ENSMUSP00000146699.2"/>
    <property type="gene ID" value="ENSMUSG00000030922.13"/>
</dbReference>
<dbReference type="Ensembl" id="ENSMUST00000208424.2">
    <property type="protein sequence ID" value="ENSMUSP00000146841.2"/>
    <property type="gene ID" value="ENSMUSG00000030922.13"/>
</dbReference>
<dbReference type="GeneID" id="73919"/>
<dbReference type="KEGG" id="mmu:73919"/>
<dbReference type="UCSC" id="uc009jma.1">
    <property type="organism name" value="mouse"/>
</dbReference>
<dbReference type="AGR" id="MGI:1921169"/>
<dbReference type="CTD" id="57149"/>
<dbReference type="MGI" id="MGI:1921169">
    <property type="gene designation" value="Lyrm1"/>
</dbReference>
<dbReference type="VEuPathDB" id="HostDB:ENSMUSG00000030922"/>
<dbReference type="eggNOG" id="ENOG502S0XV">
    <property type="taxonomic scope" value="Eukaryota"/>
</dbReference>
<dbReference type="GeneTree" id="ENSGT00390000006695"/>
<dbReference type="HOGENOM" id="CLU_141097_0_0_1"/>
<dbReference type="InParanoid" id="Q9CQB7"/>
<dbReference type="OMA" id="KNWQSAS"/>
<dbReference type="OrthoDB" id="275715at2759"/>
<dbReference type="PhylomeDB" id="Q9CQB7"/>
<dbReference type="TreeFam" id="TF324686"/>
<dbReference type="BioGRID-ORCS" id="73919">
    <property type="hits" value="1 hit in 77 CRISPR screens"/>
</dbReference>
<dbReference type="PRO" id="PR:Q9CQB7"/>
<dbReference type="Proteomes" id="UP000000589">
    <property type="component" value="Chromosome 7"/>
</dbReference>
<dbReference type="RNAct" id="Q9CQB7">
    <property type="molecule type" value="protein"/>
</dbReference>
<dbReference type="Bgee" id="ENSMUSG00000030922">
    <property type="expression patterns" value="Expressed in spermatocyte and 213 other cell types or tissues"/>
</dbReference>
<dbReference type="GO" id="GO:0030496">
    <property type="term" value="C:midbody"/>
    <property type="evidence" value="ECO:0007669"/>
    <property type="project" value="Ensembl"/>
</dbReference>
<dbReference type="GO" id="GO:0005739">
    <property type="term" value="C:mitochondrion"/>
    <property type="evidence" value="ECO:0007005"/>
    <property type="project" value="MGI"/>
</dbReference>
<dbReference type="GO" id="GO:0005654">
    <property type="term" value="C:nucleoplasm"/>
    <property type="evidence" value="ECO:0007669"/>
    <property type="project" value="Ensembl"/>
</dbReference>
<dbReference type="CDD" id="cd20261">
    <property type="entry name" value="Complex1_LYR_LYRM1"/>
    <property type="match status" value="1"/>
</dbReference>
<dbReference type="InterPro" id="IPR008011">
    <property type="entry name" value="Complex1_LYR_dom"/>
</dbReference>
<dbReference type="InterPro" id="IPR045294">
    <property type="entry name" value="Complex1_LYR_LYRM1"/>
</dbReference>
<dbReference type="InterPro" id="IPR040330">
    <property type="entry name" value="LYRM1"/>
</dbReference>
<dbReference type="PANTHER" id="PTHR14273">
    <property type="entry name" value="LYR MOTIF-CONTAINING PROTEIN 1"/>
    <property type="match status" value="1"/>
</dbReference>
<dbReference type="PANTHER" id="PTHR14273:SF0">
    <property type="entry name" value="LYR MOTIF-CONTAINING PROTEIN 1"/>
    <property type="match status" value="1"/>
</dbReference>
<dbReference type="Pfam" id="PF05347">
    <property type="entry name" value="Complex1_LYR"/>
    <property type="match status" value="1"/>
</dbReference>
<comment type="function">
    <text evidence="1">May promote cell proliferation and inhibition of apoptosis of preadipocytes.</text>
</comment>
<comment type="similarity">
    <text evidence="2">Belongs to the complex I LYR family.</text>
</comment>